<organism>
    <name type="scientific">Pisum sativum</name>
    <name type="common">Garden pea</name>
    <name type="synonym">Lathyrus oleraceus</name>
    <dbReference type="NCBI Taxonomy" id="3888"/>
    <lineage>
        <taxon>Eukaryota</taxon>
        <taxon>Viridiplantae</taxon>
        <taxon>Streptophyta</taxon>
        <taxon>Embryophyta</taxon>
        <taxon>Tracheophyta</taxon>
        <taxon>Spermatophyta</taxon>
        <taxon>Magnoliopsida</taxon>
        <taxon>eudicotyledons</taxon>
        <taxon>Gunneridae</taxon>
        <taxon>Pentapetalae</taxon>
        <taxon>rosids</taxon>
        <taxon>fabids</taxon>
        <taxon>Fabales</taxon>
        <taxon>Fabaceae</taxon>
        <taxon>Papilionoideae</taxon>
        <taxon>50 kb inversion clade</taxon>
        <taxon>NPAAA clade</taxon>
        <taxon>Hologalegina</taxon>
        <taxon>IRL clade</taxon>
        <taxon>Fabeae</taxon>
        <taxon>Pisum</taxon>
    </lineage>
</organism>
<dbReference type="EC" id="2.3.2.27" evidence="2"/>
<dbReference type="EMBL" id="Y09579">
    <property type="protein sequence ID" value="CAA70768.1"/>
    <property type="molecule type" value="mRNA"/>
</dbReference>
<dbReference type="PIR" id="T06560">
    <property type="entry name" value="T06560"/>
</dbReference>
<dbReference type="SMR" id="P93471"/>
<dbReference type="UniPathway" id="UPA00143"/>
<dbReference type="GO" id="GO:0005737">
    <property type="term" value="C:cytoplasm"/>
    <property type="evidence" value="ECO:0007669"/>
    <property type="project" value="UniProtKB-SubCell"/>
</dbReference>
<dbReference type="GO" id="GO:0005634">
    <property type="term" value="C:nucleus"/>
    <property type="evidence" value="ECO:0007669"/>
    <property type="project" value="UniProtKB-SubCell"/>
</dbReference>
<dbReference type="GO" id="GO:0061630">
    <property type="term" value="F:ubiquitin protein ligase activity"/>
    <property type="evidence" value="ECO:0007669"/>
    <property type="project" value="InterPro"/>
</dbReference>
<dbReference type="GO" id="GO:0008270">
    <property type="term" value="F:zinc ion binding"/>
    <property type="evidence" value="ECO:0007669"/>
    <property type="project" value="UniProtKB-KW"/>
</dbReference>
<dbReference type="GO" id="GO:0043161">
    <property type="term" value="P:proteasome-mediated ubiquitin-dependent protein catabolic process"/>
    <property type="evidence" value="ECO:0007669"/>
    <property type="project" value="TreeGrafter"/>
</dbReference>
<dbReference type="GO" id="GO:0016567">
    <property type="term" value="P:protein ubiquitination"/>
    <property type="evidence" value="ECO:0007669"/>
    <property type="project" value="UniProtKB-UniPathway"/>
</dbReference>
<dbReference type="GO" id="GO:0009585">
    <property type="term" value="P:red, far-red light phototransduction"/>
    <property type="evidence" value="ECO:0007669"/>
    <property type="project" value="UniProtKB-KW"/>
</dbReference>
<dbReference type="CDD" id="cd16504">
    <property type="entry name" value="RING-HC_COP1"/>
    <property type="match status" value="1"/>
</dbReference>
<dbReference type="FunFam" id="2.130.10.10:FF:000090">
    <property type="entry name" value="E3 ubiquitin-protein ligase RFWD2 isoform X1"/>
    <property type="match status" value="1"/>
</dbReference>
<dbReference type="Gene3D" id="2.130.10.10">
    <property type="entry name" value="YVTN repeat-like/Quinoprotein amine dehydrogenase"/>
    <property type="match status" value="1"/>
</dbReference>
<dbReference type="Gene3D" id="3.30.40.10">
    <property type="entry name" value="Zinc/RING finger domain, C3HC4 (zinc finger)"/>
    <property type="match status" value="1"/>
</dbReference>
<dbReference type="InterPro" id="IPR042755">
    <property type="entry name" value="COP1"/>
</dbReference>
<dbReference type="InterPro" id="IPR015943">
    <property type="entry name" value="WD40/YVTN_repeat-like_dom_sf"/>
</dbReference>
<dbReference type="InterPro" id="IPR019775">
    <property type="entry name" value="WD40_repeat_CS"/>
</dbReference>
<dbReference type="InterPro" id="IPR036322">
    <property type="entry name" value="WD40_repeat_dom_sf"/>
</dbReference>
<dbReference type="InterPro" id="IPR001680">
    <property type="entry name" value="WD40_rpt"/>
</dbReference>
<dbReference type="InterPro" id="IPR001841">
    <property type="entry name" value="Znf_RING"/>
</dbReference>
<dbReference type="InterPro" id="IPR013083">
    <property type="entry name" value="Znf_RING/FYVE/PHD"/>
</dbReference>
<dbReference type="InterPro" id="IPR017907">
    <property type="entry name" value="Znf_RING_CS"/>
</dbReference>
<dbReference type="PANTHER" id="PTHR44080">
    <property type="entry name" value="E3 UBIQUITIN-PROTEIN LIGASE COP1"/>
    <property type="match status" value="1"/>
</dbReference>
<dbReference type="PANTHER" id="PTHR44080:SF1">
    <property type="entry name" value="E3 UBIQUITIN-PROTEIN LIGASE COP1"/>
    <property type="match status" value="1"/>
</dbReference>
<dbReference type="Pfam" id="PF00400">
    <property type="entry name" value="WD40"/>
    <property type="match status" value="3"/>
</dbReference>
<dbReference type="Pfam" id="PF13923">
    <property type="entry name" value="zf-C3HC4_2"/>
    <property type="match status" value="1"/>
</dbReference>
<dbReference type="SMART" id="SM00184">
    <property type="entry name" value="RING"/>
    <property type="match status" value="1"/>
</dbReference>
<dbReference type="SMART" id="SM00320">
    <property type="entry name" value="WD40"/>
    <property type="match status" value="7"/>
</dbReference>
<dbReference type="SUPFAM" id="SSF57850">
    <property type="entry name" value="RING/U-box"/>
    <property type="match status" value="1"/>
</dbReference>
<dbReference type="SUPFAM" id="SSF50978">
    <property type="entry name" value="WD40 repeat-like"/>
    <property type="match status" value="1"/>
</dbReference>
<dbReference type="PROSITE" id="PS00678">
    <property type="entry name" value="WD_REPEATS_1"/>
    <property type="match status" value="1"/>
</dbReference>
<dbReference type="PROSITE" id="PS50082">
    <property type="entry name" value="WD_REPEATS_2"/>
    <property type="match status" value="2"/>
</dbReference>
<dbReference type="PROSITE" id="PS50294">
    <property type="entry name" value="WD_REPEATS_REGION"/>
    <property type="match status" value="1"/>
</dbReference>
<dbReference type="PROSITE" id="PS00518">
    <property type="entry name" value="ZF_RING_1"/>
    <property type="match status" value="1"/>
</dbReference>
<dbReference type="PROSITE" id="PS50089">
    <property type="entry name" value="ZF_RING_2"/>
    <property type="match status" value="1"/>
</dbReference>
<name>COP1_PEA</name>
<comment type="function">
    <text evidence="2">E3 ubiquitin-protein ligase that acts as a repressor of photomorphogenesis and as an activator of etiolation in darkness. E3 ubiquitin ligases accept ubiquitin from an E2 ubiquitin-conjugating enzyme in the form of a thioester and then directly transfers the ubiquitin to targeted substrates. Represses photomorphogenesis in darkness by mediating ubiquitination and subsequent proteasomal degradation of light-induced transcription factors. Light stimuli abrogate the repression of photomorphogenesis, possibly due to its localization to the cytoplasm. Could play a role in switching between skotomorphogenetic and photomorphogenetic pathways.</text>
</comment>
<comment type="catalytic activity">
    <reaction evidence="2">
        <text>S-ubiquitinyl-[E2 ubiquitin-conjugating enzyme]-L-cysteine + [acceptor protein]-L-lysine = [E2 ubiquitin-conjugating enzyme]-L-cysteine + N(6)-ubiquitinyl-[acceptor protein]-L-lysine.</text>
        <dbReference type="EC" id="2.3.2.27"/>
    </reaction>
</comment>
<comment type="pathway">
    <text>Protein modification; protein ubiquitination.</text>
</comment>
<comment type="subcellular location">
    <subcellularLocation>
        <location evidence="1">Nucleus</location>
    </subcellularLocation>
    <subcellularLocation>
        <location evidence="1">Cytoplasm</location>
    </subcellularLocation>
    <text evidence="1">Localizes to the nucleus in darkness but is gradually relocated to the cytoplasm upon illumination. Localizes to subnuclear foci (speckle) and in dispersed nuclear localization in the dark.</text>
</comment>
<comment type="similarity">
    <text evidence="6">Belongs to the COP1 family.</text>
</comment>
<evidence type="ECO:0000250" key="1"/>
<evidence type="ECO:0000250" key="2">
    <source>
        <dbReference type="UniProtKB" id="P43254"/>
    </source>
</evidence>
<evidence type="ECO:0000255" key="3"/>
<evidence type="ECO:0000255" key="4">
    <source>
        <dbReference type="PROSITE-ProRule" id="PRU00175"/>
    </source>
</evidence>
<evidence type="ECO:0000256" key="5">
    <source>
        <dbReference type="SAM" id="MobiDB-lite"/>
    </source>
</evidence>
<evidence type="ECO:0000305" key="6"/>
<protein>
    <recommendedName>
        <fullName>E3 ubiquitin-protein ligase COP1</fullName>
        <ecNumber evidence="2">2.3.2.27</ecNumber>
    </recommendedName>
    <alternativeName>
        <fullName>Constitutive photomorphogenesis protein 1</fullName>
    </alternativeName>
    <alternativeName>
        <fullName evidence="6">RING-type E3 ubiquitin transferase COP1</fullName>
    </alternativeName>
</protein>
<accession>P93471</accession>
<proteinExistence type="evidence at transcript level"/>
<sequence length="672" mass="76033">MEEHSVGPLVPAVVKPEPSKNFSTDTTAAGTFLLVPTMSDLDKDFLCPICMQIIKDAFLTACGHSFCYMCIITHLRNKSDCPCCGHYLTNSNLFPNFLLDKLLKKTSDRQISKTASPVEHFRQAVQKGCEVTMKELDTLLLLLTEKKRKMEQEEAERNMQILLDFLHCLRKQKVDELKEVQTDLQFIKEDIGAVEKHRMDLYRARDRYSVKLRMLDDSGGRKSRHSSMDLNSSGLASSPLNLRGGLSSGSHTKKNDGKSQISSHGHGIQRRDPITGSDSQYINQSGLALVRKKRVHTQFNDLQECYLQKRRQAADKPHGQQERDTNFISREGYSCGLDDFQSVLTTFTRYSRLRVIAEIRHGDIFHSANIVSSIEFDRDDDLFATAGVSRRIKVFDFSAVVNEPTDAHCPVVEMTTRSKLSCLSWNKYAKNQIASSDYEGIVTVWTMTTRKSLMEYEEHEKRAWSVDFSRTDPSMLVSGSDDCKVKVWCTNQEASVLNIDMKANICCVKYNPGSGNYIAVGSADHHIHYYDLRNISRPVHVFTGHKKAVSYVKFLSNDELASASTDSTLRLWDVKQNLPVRTFRGHANEKNFVGLTVRSEYIACGSETNEVFVYHKEISKPLTWHRFGTLDMEDAEDEAGSYFISAVCWKSDRPTILTANSQGTIKVLVLAA</sequence>
<reference key="1">
    <citation type="journal article" date="1998" name="Biochim. Biophys. Acta">
        <title>Molecular cloning and sequencing of the cDNA of cop1 gene from Pisum sativum.</title>
        <authorList>
            <person name="Zhao L."/>
            <person name="Zhu Y."/>
            <person name="Wu X."/>
            <person name="Zhao J."/>
        </authorList>
    </citation>
    <scope>NUCLEOTIDE SEQUENCE [MRNA]</scope>
</reference>
<feature type="chain" id="PRO_0000055882" description="E3 ubiquitin-protein ligase COP1">
    <location>
        <begin position="1"/>
        <end position="672"/>
    </location>
</feature>
<feature type="repeat" description="WD 1">
    <location>
        <begin position="366"/>
        <end position="405"/>
    </location>
</feature>
<feature type="repeat" description="WD 2">
    <location>
        <begin position="415"/>
        <end position="455"/>
    </location>
</feature>
<feature type="repeat" description="WD 3">
    <location>
        <begin position="458"/>
        <end position="498"/>
    </location>
</feature>
<feature type="repeat" description="WD 4">
    <location>
        <begin position="500"/>
        <end position="540"/>
    </location>
</feature>
<feature type="repeat" description="WD 5">
    <location>
        <begin position="544"/>
        <end position="582"/>
    </location>
</feature>
<feature type="repeat" description="WD 6">
    <location>
        <begin position="585"/>
        <end position="624"/>
    </location>
</feature>
<feature type="repeat" description="WD 7">
    <location>
        <begin position="639"/>
        <end position="671"/>
    </location>
</feature>
<feature type="zinc finger region" description="RING-type" evidence="4">
    <location>
        <begin position="47"/>
        <end position="85"/>
    </location>
</feature>
<feature type="region of interest" description="CLS (cytoplasmic localization signal)" evidence="1">
    <location>
        <begin position="62"/>
        <end position="172"/>
    </location>
</feature>
<feature type="region of interest" description="SNLS (subnuclear localization signal)" evidence="1">
    <location>
        <begin position="115"/>
        <end position="172"/>
    </location>
</feature>
<feature type="region of interest" description="Disordered" evidence="5">
    <location>
        <begin position="216"/>
        <end position="279"/>
    </location>
</feature>
<feature type="coiled-coil region" evidence="3">
    <location>
        <begin position="129"/>
        <end position="196"/>
    </location>
</feature>
<feature type="short sequence motif" description="Bipartite nuclear localization signal" evidence="1">
    <location>
        <begin position="291"/>
        <end position="314"/>
    </location>
</feature>
<feature type="compositionally biased region" description="Polar residues" evidence="5">
    <location>
        <begin position="228"/>
        <end position="240"/>
    </location>
</feature>
<gene>
    <name type="primary">COP1</name>
</gene>
<keyword id="KW-0175">Coiled coil</keyword>
<keyword id="KW-0963">Cytoplasm</keyword>
<keyword id="KW-0479">Metal-binding</keyword>
<keyword id="KW-0539">Nucleus</keyword>
<keyword id="KW-0607">Phytochrome signaling pathway</keyword>
<keyword id="KW-0677">Repeat</keyword>
<keyword id="KW-0808">Transferase</keyword>
<keyword id="KW-0833">Ubl conjugation pathway</keyword>
<keyword id="KW-0853">WD repeat</keyword>
<keyword id="KW-0862">Zinc</keyword>
<keyword id="KW-0863">Zinc-finger</keyword>